<protein>
    <recommendedName>
        <fullName>Botulinum neurotoxin type F</fullName>
        <shortName evidence="8">BoNT/F</shortName>
    </recommendedName>
    <alternativeName>
        <fullName>Bontoxilysin-F</fullName>
    </alternativeName>
    <component>
        <recommendedName>
            <fullName>Botulinum neurotoxin F light chain</fullName>
            <shortName>LC</shortName>
            <ecNumber evidence="7">3.4.24.69</ecNumber>
        </recommendedName>
    </component>
    <component>
        <recommendedName>
            <fullName>Botulinum neurotoxin F heavy chain</fullName>
            <shortName>HC</shortName>
        </recommendedName>
    </component>
</protein>
<reference key="1">
    <citation type="journal article" date="1992" name="FEMS Microbiol. Lett.">
        <title>Sequence of the gene encoding type F neurotoxin of Clostridium botulinum.</title>
        <authorList>
            <person name="East A.K."/>
            <person name="Richardson P.T."/>
            <person name="Allaway D."/>
            <person name="Collins M.D."/>
            <person name="Roberts T.A."/>
            <person name="Thompson D.E."/>
        </authorList>
    </citation>
    <scope>NUCLEOTIDE SEQUENCE [GENOMIC DNA]</scope>
    <source>
        <strain>ATCC 23387 / Type F</strain>
    </source>
</reference>
<reference key="2">
    <citation type="journal article" date="1994" name="Curr. Microbiol.">
        <title>Conserved structure of genes encoding components of botulinum neurotoxin complex M and the sequence of the gene coding for the nontoxic component in nonproteolytic Clostridium botulinum type F.</title>
        <authorList>
            <person name="East A.K."/>
            <person name="Collins M.D."/>
        </authorList>
    </citation>
    <scope>NUCLEOTIDE SEQUENCE [GENOMIC DNA] OF 1-64</scope>
    <source>
        <strain>Hobbs FT10 / Type F</strain>
    </source>
</reference>
<reference key="3">
    <citation type="journal article" date="1993" name="J. Clin. Microbiol.">
        <title>Gene probes for identification of the botulinal neurotoxin gene and specific identification of neurotoxin types B, E, and F.</title>
        <authorList>
            <person name="Campbell K.D."/>
            <person name="Collins M.D."/>
            <person name="East A.K."/>
        </authorList>
    </citation>
    <scope>NUCLEOTIDE SEQUENCE [GENOMIC DNA] OF 634-1002</scope>
    <source>
        <strain>Craig 610 / Type F</strain>
        <strain>Hobbs FT10 / Type F</strain>
    </source>
</reference>
<reference key="4">
    <citation type="journal article" date="1993" name="J. Biol. Chem.">
        <title>Botulinum neurotoxin serotype F is a zinc endopeptidase specific for VAMP/synaptobrevin.</title>
        <authorList>
            <person name="Schiavo G."/>
            <person name="Shone C.C."/>
            <person name="Rossetto O."/>
            <person name="Alexander F.C."/>
            <person name="Montecucco C."/>
        </authorList>
    </citation>
    <scope>FUNCTION (BOTULINUM NEUROTOXIN F LIGHT CHAIN)</scope>
    <scope>IDENTIFICATION OF SUBSTRATE</scope>
    <scope>CATALYTIC ACTIVITY</scope>
    <scope>ACTIVITY REGULATION</scope>
    <scope>COFACTOR</scope>
    <scope>SUBCELLULAR LOCATION (BOTULINUM NEUROTOXIN F LIGHT CHAIN)</scope>
    <source>
        <strain>Type F</strain>
    </source>
</reference>
<reference key="5">
    <citation type="journal article" date="1994" name="J. Biol. Chem.">
        <title>Cleavage of members of the synaptobrevin/VAMP family by types D and F botulinal neurotoxins and tetanus toxin.</title>
        <authorList>
            <person name="Yamasaki S."/>
            <person name="Baumeister A."/>
            <person name="Binz T."/>
            <person name="Blasi J."/>
            <person name="Link E."/>
            <person name="Cornille F."/>
            <person name="Roques B."/>
            <person name="Fykse E.M."/>
            <person name="Suedhof T.C."/>
            <person name="Jahn R."/>
            <person name="Niemann H."/>
        </authorList>
    </citation>
    <scope>IDENTIFICATION OF SUBSTRATE</scope>
    <scope>SUBCELLULAR LOCATION (BOTULINUM NEUROTOXIN F LIGHT CHAIN)</scope>
    <source>
        <strain>Type F</strain>
    </source>
</reference>
<reference key="6">
    <citation type="journal article" date="1994" name="Proc. Natl. Acad. Sci. U.S.A.">
        <title>Synaptobrevin/vesicle-associated membrane protein (VAMP) of Aplysia californica: structure and proteolysis by tetanus toxin and botulinal neurotoxins type D and F.</title>
        <authorList>
            <person name="Yamasaki S."/>
            <person name="Hu Y."/>
            <person name="Binz T."/>
            <person name="Kalkuhl A."/>
            <person name="Kurazono H."/>
            <person name="Tamura T."/>
            <person name="Jahn R."/>
            <person name="Kandel E."/>
            <person name="Niemann H."/>
        </authorList>
    </citation>
    <scope>FUNCTION (BOTULINUM NEUROTOXIN F LIGHT CHAIN)</scope>
    <scope>CATALYTIC ACTIVITY</scope>
    <source>
        <strain>Type F</strain>
    </source>
</reference>
<reference key="7">
    <citation type="journal article" date="2017" name="Pharmacol. Rev.">
        <title>Botulinum neurotoxins: Biology, pharmacology, and toxicology.</title>
        <authorList>
            <person name="Pirazzini M."/>
            <person name="Rossetto O."/>
            <person name="Eleopra R."/>
            <person name="Montecucco C."/>
        </authorList>
    </citation>
    <scope>REVIEW</scope>
</reference>
<reference evidence="13 14" key="8">
    <citation type="journal article" date="2005" name="Biochemistry">
        <title>Structural analysis of botulinum neurotoxin serotype F light chain: implications on substrate binding and inhibitor design.</title>
        <authorList>
            <person name="Agarwal R."/>
            <person name="Binz T."/>
            <person name="Swaminathan S."/>
        </authorList>
    </citation>
    <scope>X-RAY CRYSTALLOGRAPHY (1.80 ANGSTROMS) OF 1-439 IN COMPLEX WITH ZINC</scope>
    <scope>FUNCTION (BOTULINUM NEUROTOXIN F LIGHT CHAIN)</scope>
    <scope>COFACTOR</scope>
</reference>
<sequence>MPVAINSFNYNDPVNDDTILYMQIPYEEKSKKYYKAFEIMRNVWIIPERNTIGTNPSDFDPPASLKNGSSAYYDPNYLTTDAEKDRYLKTTIKLFKRINSNPAGKVLLQEISYAKPYLGNDHTPIDEFSPVTRTTSVNIKLSTNVESSMLLNLLVLGAGPDIFESCCYPVRKLIDPDVVYDPSNYGFGSINIVTFSPEYEYTFNDISGGHNSSTESFIADPAISLAHELIHALHGLYGARGVTYEETIEVKQAPLMIAEKPIRLEEFLTFGGQDLNIITSAMKEKIYNNLLANYEKIATRLSEVNSAPPEYDINEYKDYFQWKYGLDKNADGSYTVNENKFNEIYKKLYSFTESDLANKFKVKCRNTYFIKYEFLKVPNLLDDDIYTVSEGFNIGNLAVNNRGQSIKLNPKIIDSIPDKGLVEKIVKFCKSVIPRKGTKAPPRLCIRVNNSELFFVASESSYNENDINTPKEIDDTTNLNNNYRNNLDEVILDYNSQTIPQISNRTLNTLVQDNSYVPRYDSNGTSEIEEYDVVDFNVFFYLHAQKVPEGETNISLTSSIDTALLEESKDIFFSSEFIDTINKPVNAALFIDWISKVIRDFTTEATQKSTVDKIADISLIVPYVGLALNIIIEAEKGNFEEAFELLGVGILLEFVPELTIPVILVFTIKSYIDSYENKNKAIKAINNSLIEREAKWKEIYSWIVSNWLTRINTQFNKRKEQMYQALQNQVDAIKTAIEYKYNNYTSDEKNRLESEYNINNIEEELNKKVSLAMKNIERFMTESSISYLMKLINEAKVGKLKKYDNHVKSDLLNYILDHRSILGEQTNELSDLVTSTLNSSIPFELSSYTNDKILIIYFNRLYKKIKDSSILDMRYENNKFIDISGYGSNISINGNVYIYSTNRNQFGIYNSRLSEVNIAQNNDIIYNSRYQNFSISFWVRIPKHYKPMNHNREYTIINCMGNNNSGWKISLRTVRDCEIIWTLQDTSGNKENLIFRYEELNRISNYINKWIFVTITNNRLGNSRIYINGNLIVEKSISNLGDIHVSDNILFKIVGCDDETYVGIRYFKVFNTELDKTEIETLYSNEPDPSILKNYWGNYLLYNKKYYLFNLLRKDKYITLNSGILNINQQRGVTEGSVFLNYKLYEGVEVIIRKNGPIDISNTDNFVRKNDLAYINVVDRGVEYRLYADTKSEKEKIIRTSNLNDSLGQIIVMDSIGNNCTMNFQNNNGSNIGLLGFHSNNLVASSWYYNNIRRNTSSNGCFWSSISKENGWKE</sequence>
<keyword id="KW-0002">3D-structure</keyword>
<keyword id="KW-1015">Disulfide bond</keyword>
<keyword id="KW-1032">Host cell membrane</keyword>
<keyword id="KW-1035">Host cytoplasm</keyword>
<keyword id="KW-1036">Host cytoplasmic vesicle</keyword>
<keyword id="KW-1043">Host membrane</keyword>
<keyword id="KW-1051">Host synapse</keyword>
<keyword id="KW-0378">Hydrolase</keyword>
<keyword id="KW-0446">Lipid-binding</keyword>
<keyword id="KW-0472">Membrane</keyword>
<keyword id="KW-0479">Metal-binding</keyword>
<keyword id="KW-0482">Metalloprotease</keyword>
<keyword id="KW-0528">Neurotoxin</keyword>
<keyword id="KW-0645">Protease</keyword>
<keyword id="KW-0964">Secreted</keyword>
<keyword id="KW-0800">Toxin</keyword>
<keyword id="KW-0812">Transmembrane</keyword>
<keyword id="KW-0843">Virulence</keyword>
<keyword id="KW-0862">Zinc</keyword>
<organism>
    <name type="scientific">Clostridium botulinum</name>
    <dbReference type="NCBI Taxonomy" id="1491"/>
    <lineage>
        <taxon>Bacteria</taxon>
        <taxon>Bacillati</taxon>
        <taxon>Bacillota</taxon>
        <taxon>Clostridia</taxon>
        <taxon>Eubacteriales</taxon>
        <taxon>Clostridiaceae</taxon>
        <taxon>Clostridium</taxon>
    </lineage>
</organism>
<proteinExistence type="evidence at protein level"/>
<evidence type="ECO:0000250" key="1">
    <source>
        <dbReference type="UniProtKB" id="A7GBG3"/>
    </source>
</evidence>
<evidence type="ECO:0000250" key="2">
    <source>
        <dbReference type="UniProtKB" id="P0DPI0"/>
    </source>
</evidence>
<evidence type="ECO:0000255" key="3">
    <source>
        <dbReference type="PROSITE-ProRule" id="PRU10095"/>
    </source>
</evidence>
<evidence type="ECO:0000269" key="4">
    <source>
    </source>
</evidence>
<evidence type="ECO:0000269" key="5">
    <source>
    </source>
</evidence>
<evidence type="ECO:0000269" key="6">
    <source>
    </source>
</evidence>
<evidence type="ECO:0000269" key="7">
    <source>
    </source>
</evidence>
<evidence type="ECO:0000303" key="8">
    <source>
    </source>
</evidence>
<evidence type="ECO:0000305" key="9"/>
<evidence type="ECO:0000305" key="10">
    <source>
    </source>
</evidence>
<evidence type="ECO:0000305" key="11">
    <source>
    </source>
</evidence>
<evidence type="ECO:0000305" key="12">
    <source>
    </source>
</evidence>
<evidence type="ECO:0007744" key="13">
    <source>
        <dbReference type="PDB" id="2A8A"/>
    </source>
</evidence>
<evidence type="ECO:0007744" key="14">
    <source>
        <dbReference type="PDB" id="2A97"/>
    </source>
</evidence>
<evidence type="ECO:0007829" key="15">
    <source>
        <dbReference type="PDB" id="2A8A"/>
    </source>
</evidence>
<evidence type="ECO:0007829" key="16">
    <source>
        <dbReference type="PDB" id="2A97"/>
    </source>
</evidence>
<gene>
    <name type="primary">botF</name>
</gene>
<name>BXF_CLOBO</name>
<accession>P30996</accession>
<feature type="chain" id="PRO_0000444921" description="Botulinum neurotoxin type F">
    <location>
        <begin position="1"/>
        <end position="1274"/>
    </location>
</feature>
<feature type="chain" id="PRO_0000029225" description="Botulinum neurotoxin F light chain">
    <location>
        <begin position="1"/>
        <end position="436"/>
    </location>
</feature>
<feature type="chain" id="PRO_0000029226" description="Botulinum neurotoxin F heavy chain">
    <location>
        <begin position="437"/>
        <end position="1274"/>
    </location>
</feature>
<feature type="region of interest" description="Translocation domain (TD)" evidence="2">
    <location>
        <begin position="440"/>
        <end position="862"/>
    </location>
</feature>
<feature type="region of interest" description="Belt" evidence="2">
    <location>
        <begin position="485"/>
        <end position="534"/>
    </location>
</feature>
<feature type="region of interest" description="N-terminus of receptor binding domain (N-RBD)" evidence="2">
    <location>
        <begin position="863"/>
        <end position="1087"/>
    </location>
</feature>
<feature type="region of interest" description="C-terminus of receptor binding domain (C-RBD)" evidence="2">
    <location>
        <begin position="1088"/>
        <end position="1274"/>
    </location>
</feature>
<feature type="short sequence motif" description="Host ganglioside-binding motif" evidence="2">
    <location>
        <begin position="1245"/>
        <end position="1248"/>
    </location>
</feature>
<feature type="active site" evidence="3">
    <location>
        <position position="228"/>
    </location>
</feature>
<feature type="binding site" evidence="3 4 13 14">
    <location>
        <position position="227"/>
    </location>
    <ligand>
        <name>Zn(2+)</name>
        <dbReference type="ChEBI" id="CHEBI:29105"/>
        <note>catalytic</note>
    </ligand>
</feature>
<feature type="binding site" evidence="3 4 13 14">
    <location>
        <position position="231"/>
    </location>
    <ligand>
        <name>Zn(2+)</name>
        <dbReference type="ChEBI" id="CHEBI:29105"/>
        <note>catalytic</note>
    </ligand>
</feature>
<feature type="binding site" evidence="4 13 14">
    <location>
        <position position="266"/>
    </location>
    <ligand>
        <name>Zn(2+)</name>
        <dbReference type="ChEBI" id="CHEBI:29105"/>
        <note>catalytic</note>
    </ligand>
</feature>
<feature type="disulfide bond" description="Interchain (between light and heavy chains)" evidence="2 9">
    <location>
        <begin position="429"/>
        <end position="445"/>
    </location>
</feature>
<feature type="strand" evidence="16">
    <location>
        <begin position="16"/>
        <end position="22"/>
    </location>
</feature>
<feature type="helix" evidence="16">
    <location>
        <begin position="28"/>
        <end position="30"/>
    </location>
</feature>
<feature type="strand" evidence="16">
    <location>
        <begin position="34"/>
        <end position="40"/>
    </location>
</feature>
<feature type="strand" evidence="16">
    <location>
        <begin position="43"/>
        <end position="49"/>
    </location>
</feature>
<feature type="helix" evidence="16">
    <location>
        <begin position="56"/>
        <end position="59"/>
    </location>
</feature>
<feature type="strand" evidence="16">
    <location>
        <begin position="69"/>
        <end position="71"/>
    </location>
</feature>
<feature type="turn" evidence="16">
    <location>
        <begin position="75"/>
        <end position="78"/>
    </location>
</feature>
<feature type="helix" evidence="16">
    <location>
        <begin position="81"/>
        <end position="98"/>
    </location>
</feature>
<feature type="helix" evidence="16">
    <location>
        <begin position="102"/>
        <end position="113"/>
    </location>
</feature>
<feature type="turn" evidence="16">
    <location>
        <begin position="133"/>
        <end position="135"/>
    </location>
</feature>
<feature type="strand" evidence="16">
    <location>
        <begin position="136"/>
        <end position="140"/>
    </location>
</feature>
<feature type="strand" evidence="16">
    <location>
        <begin position="146"/>
        <end position="150"/>
    </location>
</feature>
<feature type="strand" evidence="16">
    <location>
        <begin position="152"/>
        <end position="157"/>
    </location>
</feature>
<feature type="strand" evidence="16">
    <location>
        <begin position="166"/>
        <end position="169"/>
    </location>
</feature>
<feature type="helix" evidence="16">
    <location>
        <begin position="182"/>
        <end position="184"/>
    </location>
</feature>
<feature type="strand" evidence="16">
    <location>
        <begin position="185"/>
        <end position="187"/>
    </location>
</feature>
<feature type="strand" evidence="16">
    <location>
        <begin position="191"/>
        <end position="194"/>
    </location>
</feature>
<feature type="strand" evidence="16">
    <location>
        <begin position="199"/>
        <end position="203"/>
    </location>
</feature>
<feature type="strand" evidence="15">
    <location>
        <begin position="216"/>
        <end position="218"/>
    </location>
</feature>
<feature type="helix" evidence="16">
    <location>
        <begin position="221"/>
        <end position="236"/>
    </location>
</feature>
<feature type="turn" evidence="16">
    <location>
        <begin position="241"/>
        <end position="245"/>
    </location>
</feature>
<feature type="strand" evidence="15">
    <location>
        <begin position="247"/>
        <end position="251"/>
    </location>
</feature>
<feature type="turn" evidence="15">
    <location>
        <begin position="253"/>
        <end position="256"/>
    </location>
</feature>
<feature type="strand" evidence="15">
    <location>
        <begin position="259"/>
        <end position="263"/>
    </location>
</feature>
<feature type="helix" evidence="16">
    <location>
        <begin position="264"/>
        <end position="270"/>
    </location>
</feature>
<feature type="helix" evidence="16">
    <location>
        <begin position="272"/>
        <end position="277"/>
    </location>
</feature>
<feature type="helix" evidence="16">
    <location>
        <begin position="280"/>
        <end position="303"/>
    </location>
</feature>
<feature type="helix" evidence="16">
    <location>
        <begin position="313"/>
        <end position="323"/>
    </location>
</feature>
<feature type="strand" evidence="16">
    <location>
        <begin position="326"/>
        <end position="328"/>
    </location>
</feature>
<feature type="strand" evidence="16">
    <location>
        <begin position="334"/>
        <end position="336"/>
    </location>
</feature>
<feature type="helix" evidence="16">
    <location>
        <begin position="338"/>
        <end position="348"/>
    </location>
</feature>
<feature type="helix" evidence="16">
    <location>
        <begin position="353"/>
        <end position="360"/>
    </location>
</feature>
<feature type="strand" evidence="16">
    <location>
        <begin position="366"/>
        <end position="369"/>
    </location>
</feature>
<feature type="strand" evidence="16">
    <location>
        <begin position="374"/>
        <end position="376"/>
    </location>
</feature>
<feature type="turn" evidence="16">
    <location>
        <begin position="383"/>
        <end position="385"/>
    </location>
</feature>
<feature type="turn" evidence="16">
    <location>
        <begin position="388"/>
        <end position="390"/>
    </location>
</feature>
<feature type="helix" evidence="16">
    <location>
        <begin position="395"/>
        <end position="404"/>
    </location>
</feature>
<feature type="turn" evidence="16">
    <location>
        <begin position="406"/>
        <end position="408"/>
    </location>
</feature>
<feature type="helix" evidence="16">
    <location>
        <begin position="410"/>
        <end position="412"/>
    </location>
</feature>
<comment type="function">
    <molecule>Botulinum neurotoxin type F</molecule>
    <text evidence="1 7">Botulinum toxin causes flaccid paralysis by inhibiting neurotransmitter (acetylcholine) release from the presynaptic membranes of nerve terminals of the eukaryotic host skeletal and autonomic nervous system, with frequent heart or respiratory failure. Precursor of botulinum neurotoxin F which may have 2 coreceptors; complex polysialylated gangliosides found on neural tissue and specific membrane-anchored proteins found in synaptic vesicles. Receptor proteins are exposed on host presynaptic cell membrane during neurotransmitter release, when the toxin heavy chain (HC) binds to them. Upon synaptic vesicle recycling the toxin is taken up via the endocytic pathway. When the pH of the toxin-containing endosome drops a structural rearrangement occurs so that the N-terminus of the HC forms pores that allows the light chain (LC) to translocate into the cytosol. Once in the cytosol the disulfide bond linking the 2 subunits is reduced and LC cleaves its target protein on synaptic vesicles, preventing their fusion with the cytoplasmic membrane and thus neurotransmitter release (By similarity). Whole toxin only has protease activity after reduction, which releases LC (PubMed:8505288). Requires complex eukaryotic host polysialogangliosides for full neurotoxicity (By similarity). It is not clear whether a synaptic vesicle protein acts as its receptor; there is evidence for and against SV2 fulfilling this function (By similarity).</text>
</comment>
<comment type="function">
    <molecule>Botulinum neurotoxin F light chain</molecule>
    <text evidence="5 6 7 10">Has proteolytic activity (PubMed:8175689, PubMed:8197120, PubMed:8505288). After translocation into the eukaryotic host cytosol, inhibits neurotransmitter release by acting as a zinc endopeptidase that catalyzes the hydrolysis of the '60-Gln-|-Lys-61' bond of synaptobrevin-1/VAMP1 and the equivalent 'Gln-|-Lys' sites in VAMP2 and VAMP3 (PubMed:8175689, PubMed:8505288). Cleaves the '48-Gln-|-Lys-49' bond of A.californica synaptobrevin (AC P35589) (PubMed:8197120).</text>
</comment>
<comment type="function">
    <molecule>Botulinum neurotoxin F heavy chain</molecule>
    <text evidence="1">Responsible for host epithelial cell transcytosis, host nerve cell targeting and translocation of light chain (LC) into host cytosol. Composed of 3 subdomains; the translocation domain (TD), and N-terminus and C-terminus of the receptor-binding domain (RBD). The RBD is responsible for the adherence of the toxin to the cell surface. It simultaneously recognizes 2 coreceptors; polysialated gangliosides and the receptor protein SV2A, SV2B and SV2C in close proximity on host synaptic vesicles; although not all evidence indicates these are the receptors (By similarity). The N-terminus of the TD wraps an extended belt around the perimeter of the LC, protecting Zn(2+) in the active site; it may also prevent premature LC dissociation from the translocation channel and protect toxin prior to translocation (By similarity). The TD inserts into synaptic vesicle membrane to allow translocation into the host cytosol (By similarity).</text>
</comment>
<comment type="catalytic activity">
    <reaction evidence="6 7">
        <text>Limited hydrolysis of proteins of the neuroexocytosis apparatus, synaptobrevins, SNAP25 or syntaxin. No detected action on small molecule substrates.</text>
        <dbReference type="EC" id="3.4.24.69"/>
    </reaction>
</comment>
<comment type="cofactor">
    <cofactor evidence="4 12">
        <name>Zn(2+)</name>
        <dbReference type="ChEBI" id="CHEBI:29105"/>
    </cofactor>
    <text evidence="4 12">Binds 1 zinc ion per subunit (PubMed:16128577, PubMed:8505288).</text>
</comment>
<comment type="activity regulation">
    <text evidence="7">Proteolysis inhibited by 1,10-phenanthroline, captopril and EDTA (PubMed:8505288).</text>
</comment>
<comment type="subunit">
    <text evidence="1">Heterodimer; disulfide-linked heterodimer of a light chain (LC) and a heavy chain (HC). The LC has the proteolytic/pharmacological activity, while the N- and C-terminal of the HC mediate channel formation and toxin binding, respectively. Interacts with host synaptic vesicle glycoproteins SV2A, SV2B and SV2C (By similarity).</text>
</comment>
<comment type="subcellular location">
    <molecule>Botulinum neurotoxin type F</molecule>
    <subcellularLocation>
        <location evidence="2">Secreted</location>
    </subcellularLocation>
</comment>
<comment type="subcellular location">
    <molecule>Botulinum neurotoxin F light chain</molecule>
    <subcellularLocation>
        <location evidence="2">Secreted</location>
    </subcellularLocation>
    <subcellularLocation>
        <location evidence="11 12">Host cytoplasm</location>
        <location evidence="11 12">Host cytosol</location>
    </subcellularLocation>
</comment>
<comment type="subcellular location">
    <molecule>Botulinum neurotoxin F heavy chain</molecule>
    <subcellularLocation>
        <location evidence="2">Secreted</location>
    </subcellularLocation>
    <subcellularLocation>
        <location evidence="9">Host synapse</location>
        <location evidence="9">Host presynaptic cell membrane</location>
    </subcellularLocation>
    <subcellularLocation>
        <location evidence="2">Host cytoplasmic vesicle</location>
        <location evidence="2">Host secretory vesicle</location>
        <location evidence="2">Host synaptic vesicle membrane</location>
        <topology evidence="9">Multi-pass membrane protein</topology>
    </subcellularLocation>
</comment>
<comment type="domain">
    <molecule>Botulinum neurotoxin F light chain</molecule>
    <text evidence="5 6 7">Has protease activity (PubMed:8175689, PubMed:8197120, PubMed:8505288).</text>
</comment>
<comment type="domain">
    <molecule>Botulinum neurotoxin F heavy chain</molecule>
    <text evidence="1">Has 3 functional domains; the translocation domain (TD) and the receptor-binding domain (RBD) which is further subdivided into N- and C-terminal domains (N-RBD and C-RBD) (By similarity). The N-terminus of the TD wraps an extended belt around the perimeter of the LC, protecting Zn(2+) in the active site and may be a pseudosubstrate inhibitor which serves as an intramolecular chaperone for the LC prior to its translocation into the host cytosol (By similarity). The RBD binds transiently exposed coreceptors on the host presynaptic cell membrane (By similarity).</text>
</comment>
<comment type="miscellaneous">
    <text>There are seven antigenically distinct forms of botulinum neurotoxin: Types A, B, C, D, E, F, and G; new subtypes are quite frequent.</text>
</comment>
<comment type="miscellaneous">
    <text evidence="2">Botulism poisoning is usually food-borne, either by ingesting toxin or bacterial-contaminated food, or less frequently by inhalation poisoning. In both cases the neurotoxin binds to the apical surface of epithelial cells in the gut or airway. Toxin undergoes receptor-mediated endocytosis (using a different receptor than on target nerve cells), transcytosis across the epithelial cells and release into the general circulation. Once in the general circulation it binds to its target cells.</text>
</comment>
<comment type="similarity">
    <text evidence="9">Belongs to the peptidase M27 family.</text>
</comment>
<comment type="caution">
    <text evidence="9">It is not clear whether a synaptic vesicle protein acts as its receptor; there is evidence for and against SV2 fulfilling this function.</text>
</comment>
<comment type="online information" name="BotDB - A Database Resource for Clostridial Neurotoxins">
    <link uri="https://botdb.abcc.ncifcrf.gov/"/>
</comment>
<dbReference type="EC" id="3.4.24.69" evidence="7"/>
<dbReference type="EMBL" id="M92906">
    <property type="protein sequence ID" value="AAA23263.1"/>
    <property type="molecule type" value="Genomic_DNA"/>
</dbReference>
<dbReference type="EMBL" id="S73676">
    <property type="protein sequence ID" value="AAC60475.1"/>
    <property type="molecule type" value="Genomic_DNA"/>
</dbReference>
<dbReference type="EMBL" id="X70820">
    <property type="protein sequence ID" value="CAA50151.1"/>
    <property type="molecule type" value="Genomic_DNA"/>
</dbReference>
<dbReference type="EMBL" id="X70816">
    <property type="protein sequence ID" value="CAA50147.1"/>
    <property type="molecule type" value="Genomic_DNA"/>
</dbReference>
<dbReference type="PIR" id="I40813">
    <property type="entry name" value="I40813"/>
</dbReference>
<dbReference type="PIR" id="S48109">
    <property type="entry name" value="S48109"/>
</dbReference>
<dbReference type="PDB" id="2A8A">
    <property type="method" value="X-ray"/>
    <property type="resolution" value="2.00 A"/>
    <property type="chains" value="A=1-439"/>
</dbReference>
<dbReference type="PDB" id="2A97">
    <property type="method" value="X-ray"/>
    <property type="resolution" value="1.80 A"/>
    <property type="chains" value="A/B=1-439"/>
</dbReference>
<dbReference type="PDBsum" id="2A8A"/>
<dbReference type="PDBsum" id="2A97"/>
<dbReference type="SMR" id="P30996"/>
<dbReference type="IntAct" id="P30996">
    <property type="interactions" value="2"/>
</dbReference>
<dbReference type="MINT" id="P30996"/>
<dbReference type="BindingDB" id="P30996"/>
<dbReference type="ChEMBL" id="CHEMBL2007627"/>
<dbReference type="DrugBank" id="DB13901">
    <property type="generic name" value="Equine Botulinum Neurotoxin F Immune FAB2"/>
</dbReference>
<dbReference type="ABCD" id="P30996">
    <property type="antibodies" value="10 sequenced antibodies"/>
</dbReference>
<dbReference type="BRENDA" id="3.4.24.69">
    <property type="organism ID" value="1462"/>
</dbReference>
<dbReference type="Reactome" id="R-HSA-5250981">
    <property type="pathway name" value="Toxicity of botulinum toxin type F (botF)"/>
</dbReference>
<dbReference type="EvolutionaryTrace" id="P30996"/>
<dbReference type="GO" id="GO:0005576">
    <property type="term" value="C:extracellular region"/>
    <property type="evidence" value="ECO:0007669"/>
    <property type="project" value="UniProtKB-SubCell"/>
</dbReference>
<dbReference type="GO" id="GO:0044161">
    <property type="term" value="C:host cell cytoplasmic vesicle"/>
    <property type="evidence" value="ECO:0007669"/>
    <property type="project" value="UniProtKB-SubCell"/>
</dbReference>
<dbReference type="GO" id="GO:0044164">
    <property type="term" value="C:host cell cytosol"/>
    <property type="evidence" value="ECO:0007669"/>
    <property type="project" value="UniProtKB-SubCell"/>
</dbReference>
<dbReference type="GO" id="GO:0020002">
    <property type="term" value="C:host cell plasma membrane"/>
    <property type="evidence" value="ECO:0007669"/>
    <property type="project" value="UniProtKB-KW"/>
</dbReference>
<dbReference type="GO" id="GO:0044231">
    <property type="term" value="C:host cell presynaptic membrane"/>
    <property type="evidence" value="ECO:0007669"/>
    <property type="project" value="UniProtKB-SubCell"/>
</dbReference>
<dbReference type="GO" id="GO:0016020">
    <property type="term" value="C:membrane"/>
    <property type="evidence" value="ECO:0007669"/>
    <property type="project" value="UniProtKB-KW"/>
</dbReference>
<dbReference type="GO" id="GO:0008289">
    <property type="term" value="F:lipid binding"/>
    <property type="evidence" value="ECO:0007669"/>
    <property type="project" value="UniProtKB-KW"/>
</dbReference>
<dbReference type="GO" id="GO:0004222">
    <property type="term" value="F:metalloendopeptidase activity"/>
    <property type="evidence" value="ECO:0007669"/>
    <property type="project" value="UniProtKB-EC"/>
</dbReference>
<dbReference type="GO" id="GO:0008320">
    <property type="term" value="F:protein transmembrane transporter activity"/>
    <property type="evidence" value="ECO:0000304"/>
    <property type="project" value="Reactome"/>
</dbReference>
<dbReference type="GO" id="GO:0090729">
    <property type="term" value="F:toxin activity"/>
    <property type="evidence" value="ECO:0007669"/>
    <property type="project" value="UniProtKB-KW"/>
</dbReference>
<dbReference type="GO" id="GO:0008270">
    <property type="term" value="F:zinc ion binding"/>
    <property type="evidence" value="ECO:0007669"/>
    <property type="project" value="InterPro"/>
</dbReference>
<dbReference type="GO" id="GO:0006508">
    <property type="term" value="P:proteolysis"/>
    <property type="evidence" value="ECO:0007669"/>
    <property type="project" value="UniProtKB-KW"/>
</dbReference>
<dbReference type="CDD" id="cd23393">
    <property type="entry name" value="Toxin_R_bind_C_BoNTF"/>
    <property type="match status" value="1"/>
</dbReference>
<dbReference type="DisProt" id="DP03019"/>
<dbReference type="FunFam" id="2.60.120.200:FF:000184">
    <property type="entry name" value="Botulinum neurotoxin type A"/>
    <property type="match status" value="1"/>
</dbReference>
<dbReference type="FunFam" id="3.90.1240.10:FF:000001">
    <property type="entry name" value="Botulinum neurotoxin type B"/>
    <property type="match status" value="1"/>
</dbReference>
<dbReference type="Gene3D" id="2.60.120.200">
    <property type="match status" value="1"/>
</dbReference>
<dbReference type="Gene3D" id="2.80.10.50">
    <property type="match status" value="1"/>
</dbReference>
<dbReference type="Gene3D" id="1.20.1120.10">
    <property type="entry name" value="Clostridium botulinum neurotoxin b, 'coiled-coil' domain"/>
    <property type="match status" value="1"/>
</dbReference>
<dbReference type="Gene3D" id="3.90.1240.10">
    <property type="entry name" value="Metalloproteases ('zincins'), catalytic domain like"/>
    <property type="match status" value="1"/>
</dbReference>
<dbReference type="InterPro" id="IPR000395">
    <property type="entry name" value="Bot/tetX_LC"/>
</dbReference>
<dbReference type="InterPro" id="IPR036248">
    <property type="entry name" value="Clostridium_toxin_transloc"/>
</dbReference>
<dbReference type="InterPro" id="IPR013320">
    <property type="entry name" value="ConA-like_dom_sf"/>
</dbReference>
<dbReference type="InterPro" id="IPR011065">
    <property type="entry name" value="Kunitz_inhibitor_STI-like_sf"/>
</dbReference>
<dbReference type="InterPro" id="IPR013104">
    <property type="entry name" value="Toxin_rcpt-bd_C"/>
</dbReference>
<dbReference type="InterPro" id="IPR012928">
    <property type="entry name" value="Toxin_rcpt-bd_N"/>
</dbReference>
<dbReference type="InterPro" id="IPR012500">
    <property type="entry name" value="Toxin_trans"/>
</dbReference>
<dbReference type="Pfam" id="PF01742">
    <property type="entry name" value="Peptidase_M27"/>
    <property type="match status" value="1"/>
</dbReference>
<dbReference type="Pfam" id="PF07951">
    <property type="entry name" value="Toxin_R_bind_C"/>
    <property type="match status" value="1"/>
</dbReference>
<dbReference type="Pfam" id="PF07953">
    <property type="entry name" value="Toxin_R_bind_N"/>
    <property type="match status" value="1"/>
</dbReference>
<dbReference type="Pfam" id="PF07952">
    <property type="entry name" value="Toxin_trans"/>
    <property type="match status" value="1"/>
</dbReference>
<dbReference type="PRINTS" id="PR00760">
    <property type="entry name" value="BONTOXILYSIN"/>
</dbReference>
<dbReference type="SUPFAM" id="SSF58091">
    <property type="entry name" value="Clostridium neurotoxins, 'coiled-coil' domain"/>
    <property type="match status" value="1"/>
</dbReference>
<dbReference type="SUPFAM" id="SSF49899">
    <property type="entry name" value="Concanavalin A-like lectins/glucanases"/>
    <property type="match status" value="1"/>
</dbReference>
<dbReference type="SUPFAM" id="SSF55486">
    <property type="entry name" value="Metalloproteases ('zincins'), catalytic domain"/>
    <property type="match status" value="1"/>
</dbReference>
<dbReference type="SUPFAM" id="SSF50386">
    <property type="entry name" value="STI-like"/>
    <property type="match status" value="1"/>
</dbReference>
<dbReference type="PROSITE" id="PS00142">
    <property type="entry name" value="ZINC_PROTEASE"/>
    <property type="match status" value="1"/>
</dbReference>